<accession>Q6DD39</accession>
<dbReference type="EMBL" id="BC077790">
    <property type="protein sequence ID" value="AAH77790.1"/>
    <property type="molecule type" value="mRNA"/>
</dbReference>
<dbReference type="RefSeq" id="NP_001086933.1">
    <property type="nucleotide sequence ID" value="NM_001093464.1"/>
</dbReference>
<dbReference type="SMR" id="Q6DD39"/>
<dbReference type="DNASU" id="446768"/>
<dbReference type="GeneID" id="446768"/>
<dbReference type="KEGG" id="xla:446768"/>
<dbReference type="AGR" id="Xenbase:XB-GENE-6255351"/>
<dbReference type="CTD" id="446768"/>
<dbReference type="Xenbase" id="XB-GENE-6255351">
    <property type="gene designation" value="med18.S"/>
</dbReference>
<dbReference type="OMA" id="ARGYMFR"/>
<dbReference type="OrthoDB" id="10018982at2759"/>
<dbReference type="Proteomes" id="UP000186698">
    <property type="component" value="Chromosome 2S"/>
</dbReference>
<dbReference type="Bgee" id="446768">
    <property type="expression patterns" value="Expressed in oocyte and 19 other cell types or tissues"/>
</dbReference>
<dbReference type="GO" id="GO:0070847">
    <property type="term" value="C:core mediator complex"/>
    <property type="evidence" value="ECO:0000318"/>
    <property type="project" value="GO_Central"/>
</dbReference>
<dbReference type="GO" id="GO:0016592">
    <property type="term" value="C:mediator complex"/>
    <property type="evidence" value="ECO:0000318"/>
    <property type="project" value="GO_Central"/>
</dbReference>
<dbReference type="GO" id="GO:0003712">
    <property type="term" value="F:transcription coregulator activity"/>
    <property type="evidence" value="ECO:0000318"/>
    <property type="project" value="GO_Central"/>
</dbReference>
<dbReference type="GO" id="GO:0060261">
    <property type="term" value="P:positive regulation of transcription initiation by RNA polymerase II"/>
    <property type="evidence" value="ECO:0000318"/>
    <property type="project" value="GO_Central"/>
</dbReference>
<dbReference type="GO" id="GO:0006369">
    <property type="term" value="P:termination of RNA polymerase II transcription"/>
    <property type="evidence" value="ECO:0007669"/>
    <property type="project" value="TreeGrafter"/>
</dbReference>
<dbReference type="FunFam" id="2.40.320.10:FF:000001">
    <property type="entry name" value="Mediator of RNA polymerase II transcription subunit 18"/>
    <property type="match status" value="1"/>
</dbReference>
<dbReference type="Gene3D" id="2.40.320.10">
    <property type="entry name" value="Hypothetical Protein Pfu-838710-001"/>
    <property type="match status" value="1"/>
</dbReference>
<dbReference type="InterPro" id="IPR019095">
    <property type="entry name" value="Mediator_Med18"/>
</dbReference>
<dbReference type="PANTHER" id="PTHR13321:SF2">
    <property type="entry name" value="MEDIATOR OF RNA POLYMERASE II TRANSCRIPTION SUBUNIT 18"/>
    <property type="match status" value="1"/>
</dbReference>
<dbReference type="PANTHER" id="PTHR13321">
    <property type="entry name" value="MEDIATOR OF RNA POLYMERASE II TRANSCRIPTION, SUBUNIT 18"/>
    <property type="match status" value="1"/>
</dbReference>
<dbReference type="Pfam" id="PF09637">
    <property type="entry name" value="Med18"/>
    <property type="match status" value="1"/>
</dbReference>
<comment type="function">
    <text evidence="1">Component of the Mediator complex, a coactivator involved in the regulated transcription of nearly all RNA polymerase II-dependent genes. Mediator functions as a bridge to convey information from gene-specific regulatory proteins to the basal RNA polymerase II transcription machinery. Mediator is recruited to promoters by direct interactions with regulatory proteins and serves as a scaffold for the assembly of a functional preinitiation complex with RNA polymerase II and the general transcription factors (By similarity).</text>
</comment>
<comment type="subunit">
    <text evidence="1">Component of the Mediator complex.</text>
</comment>
<comment type="subcellular location">
    <subcellularLocation>
        <location evidence="2">Nucleus</location>
    </subcellularLocation>
</comment>
<comment type="similarity">
    <text evidence="2">Belongs to the Mediator complex subunit 18 family.</text>
</comment>
<feature type="chain" id="PRO_0000304745" description="Mediator of RNA polymerase II transcription subunit 18">
    <location>
        <begin position="1"/>
        <end position="208"/>
    </location>
</feature>
<protein>
    <recommendedName>
        <fullName>Mediator of RNA polymerase II transcription subunit 18</fullName>
    </recommendedName>
    <alternativeName>
        <fullName>Mediator complex subunit 18</fullName>
    </alternativeName>
</protein>
<name>MED18_XENLA</name>
<proteinExistence type="evidence at transcript level"/>
<evidence type="ECO:0000250" key="1"/>
<evidence type="ECO:0000305" key="2"/>
<keyword id="KW-0010">Activator</keyword>
<keyword id="KW-0539">Nucleus</keyword>
<keyword id="KW-1185">Reference proteome</keyword>
<keyword id="KW-0804">Transcription</keyword>
<keyword id="KW-0805">Transcription regulation</keyword>
<gene>
    <name type="primary">med18</name>
</gene>
<sequence length="208" mass="23210">MEAPPVTTMPVSGGTINMMEYLLQGSILDQGLESLLHRLRGLCDNMEPETFADHESVYLLKGQQASPFVLRARRPLDRPGAPWHLRYLGQPEAGDRSRHTLVRNCVDIATSDVLPEFLQEMGFRMDHEFVARGHLFRKGVMKVAVYKVFRVLVSGAAEGAEPLSLSYLVELSAVAPAGQDNIADEVRGFAEQLRPLVQLEKIDPKRVM</sequence>
<reference key="1">
    <citation type="submission" date="2004-07" db="EMBL/GenBank/DDBJ databases">
        <authorList>
            <consortium name="NIH - Xenopus Gene Collection (XGC) project"/>
        </authorList>
    </citation>
    <scope>NUCLEOTIDE SEQUENCE [LARGE SCALE MRNA]</scope>
    <source>
        <tissue>Ovary</tissue>
    </source>
</reference>
<organism>
    <name type="scientific">Xenopus laevis</name>
    <name type="common">African clawed frog</name>
    <dbReference type="NCBI Taxonomy" id="8355"/>
    <lineage>
        <taxon>Eukaryota</taxon>
        <taxon>Metazoa</taxon>
        <taxon>Chordata</taxon>
        <taxon>Craniata</taxon>
        <taxon>Vertebrata</taxon>
        <taxon>Euteleostomi</taxon>
        <taxon>Amphibia</taxon>
        <taxon>Batrachia</taxon>
        <taxon>Anura</taxon>
        <taxon>Pipoidea</taxon>
        <taxon>Pipidae</taxon>
        <taxon>Xenopodinae</taxon>
        <taxon>Xenopus</taxon>
        <taxon>Xenopus</taxon>
    </lineage>
</organism>